<dbReference type="EC" id="2.7.1.39" evidence="1"/>
<dbReference type="EMBL" id="CP000436">
    <property type="protein sequence ID" value="ABI25488.1"/>
    <property type="molecule type" value="Genomic_DNA"/>
</dbReference>
<dbReference type="SMR" id="Q0I3T3"/>
<dbReference type="KEGG" id="hso:HS_1213"/>
<dbReference type="eggNOG" id="COG0083">
    <property type="taxonomic scope" value="Bacteria"/>
</dbReference>
<dbReference type="HOGENOM" id="CLU_041243_1_1_6"/>
<dbReference type="UniPathway" id="UPA00050">
    <property type="reaction ID" value="UER00064"/>
</dbReference>
<dbReference type="GO" id="GO:0005737">
    <property type="term" value="C:cytoplasm"/>
    <property type="evidence" value="ECO:0007669"/>
    <property type="project" value="UniProtKB-SubCell"/>
</dbReference>
<dbReference type="GO" id="GO:0005524">
    <property type="term" value="F:ATP binding"/>
    <property type="evidence" value="ECO:0007669"/>
    <property type="project" value="UniProtKB-UniRule"/>
</dbReference>
<dbReference type="GO" id="GO:0004413">
    <property type="term" value="F:homoserine kinase activity"/>
    <property type="evidence" value="ECO:0007669"/>
    <property type="project" value="UniProtKB-UniRule"/>
</dbReference>
<dbReference type="GO" id="GO:0009088">
    <property type="term" value="P:threonine biosynthetic process"/>
    <property type="evidence" value="ECO:0007669"/>
    <property type="project" value="UniProtKB-UniRule"/>
</dbReference>
<dbReference type="Gene3D" id="3.30.230.10">
    <property type="match status" value="1"/>
</dbReference>
<dbReference type="Gene3D" id="3.30.70.890">
    <property type="entry name" value="GHMP kinase, C-terminal domain"/>
    <property type="match status" value="1"/>
</dbReference>
<dbReference type="HAMAP" id="MF_00384">
    <property type="entry name" value="Homoser_kinase"/>
    <property type="match status" value="1"/>
</dbReference>
<dbReference type="InterPro" id="IPR013750">
    <property type="entry name" value="GHMP_kinase_C_dom"/>
</dbReference>
<dbReference type="InterPro" id="IPR036554">
    <property type="entry name" value="GHMP_kinase_C_sf"/>
</dbReference>
<dbReference type="InterPro" id="IPR006204">
    <property type="entry name" value="GHMP_kinase_N_dom"/>
</dbReference>
<dbReference type="InterPro" id="IPR006203">
    <property type="entry name" value="GHMP_knse_ATP-bd_CS"/>
</dbReference>
<dbReference type="InterPro" id="IPR000870">
    <property type="entry name" value="Homoserine_kinase"/>
</dbReference>
<dbReference type="InterPro" id="IPR020568">
    <property type="entry name" value="Ribosomal_Su5_D2-typ_SF"/>
</dbReference>
<dbReference type="InterPro" id="IPR014721">
    <property type="entry name" value="Ribsml_uS5_D2-typ_fold_subgr"/>
</dbReference>
<dbReference type="NCBIfam" id="NF002288">
    <property type="entry name" value="PRK01212.1-4"/>
    <property type="match status" value="1"/>
</dbReference>
<dbReference type="NCBIfam" id="TIGR00191">
    <property type="entry name" value="thrB"/>
    <property type="match status" value="1"/>
</dbReference>
<dbReference type="PANTHER" id="PTHR20861:SF1">
    <property type="entry name" value="HOMOSERINE KINASE"/>
    <property type="match status" value="1"/>
</dbReference>
<dbReference type="PANTHER" id="PTHR20861">
    <property type="entry name" value="HOMOSERINE/4-DIPHOSPHOCYTIDYL-2-C-METHYL-D-ERYTHRITOL KINASE"/>
    <property type="match status" value="1"/>
</dbReference>
<dbReference type="Pfam" id="PF08544">
    <property type="entry name" value="GHMP_kinases_C"/>
    <property type="match status" value="1"/>
</dbReference>
<dbReference type="Pfam" id="PF00288">
    <property type="entry name" value="GHMP_kinases_N"/>
    <property type="match status" value="1"/>
</dbReference>
<dbReference type="PIRSF" id="PIRSF000676">
    <property type="entry name" value="Homoser_kin"/>
    <property type="match status" value="1"/>
</dbReference>
<dbReference type="PRINTS" id="PR00958">
    <property type="entry name" value="HOMSERKINASE"/>
</dbReference>
<dbReference type="SUPFAM" id="SSF55060">
    <property type="entry name" value="GHMP Kinase, C-terminal domain"/>
    <property type="match status" value="1"/>
</dbReference>
<dbReference type="SUPFAM" id="SSF54211">
    <property type="entry name" value="Ribosomal protein S5 domain 2-like"/>
    <property type="match status" value="1"/>
</dbReference>
<dbReference type="PROSITE" id="PS00627">
    <property type="entry name" value="GHMP_KINASES_ATP"/>
    <property type="match status" value="1"/>
</dbReference>
<accession>Q0I3T3</accession>
<protein>
    <recommendedName>
        <fullName evidence="1">Homoserine kinase</fullName>
        <shortName evidence="1">HK</shortName>
        <shortName evidence="1">HSK</shortName>
        <ecNumber evidence="1">2.7.1.39</ecNumber>
    </recommendedName>
</protein>
<gene>
    <name evidence="1" type="primary">thrB</name>
    <name type="ordered locus">HS_1213</name>
</gene>
<organism>
    <name type="scientific">Histophilus somni (strain 129Pt)</name>
    <name type="common">Haemophilus somnus</name>
    <dbReference type="NCBI Taxonomy" id="205914"/>
    <lineage>
        <taxon>Bacteria</taxon>
        <taxon>Pseudomonadati</taxon>
        <taxon>Pseudomonadota</taxon>
        <taxon>Gammaproteobacteria</taxon>
        <taxon>Pasteurellales</taxon>
        <taxon>Pasteurellaceae</taxon>
        <taxon>Histophilus</taxon>
    </lineage>
</organism>
<comment type="function">
    <text evidence="1">Catalyzes the ATP-dependent phosphorylation of L-homoserine to L-homoserine phosphate.</text>
</comment>
<comment type="catalytic activity">
    <reaction evidence="1">
        <text>L-homoserine + ATP = O-phospho-L-homoserine + ADP + H(+)</text>
        <dbReference type="Rhea" id="RHEA:13985"/>
        <dbReference type="ChEBI" id="CHEBI:15378"/>
        <dbReference type="ChEBI" id="CHEBI:30616"/>
        <dbReference type="ChEBI" id="CHEBI:57476"/>
        <dbReference type="ChEBI" id="CHEBI:57590"/>
        <dbReference type="ChEBI" id="CHEBI:456216"/>
        <dbReference type="EC" id="2.7.1.39"/>
    </reaction>
</comment>
<comment type="pathway">
    <text evidence="1">Amino-acid biosynthesis; L-threonine biosynthesis; L-threonine from L-aspartate: step 4/5.</text>
</comment>
<comment type="subcellular location">
    <subcellularLocation>
        <location evidence="1">Cytoplasm</location>
    </subcellularLocation>
</comment>
<comment type="similarity">
    <text evidence="1">Belongs to the GHMP kinase family. Homoserine kinase subfamily.</text>
</comment>
<reference key="1">
    <citation type="journal article" date="2007" name="J. Bacteriol.">
        <title>Complete genome sequence of Haemophilus somnus (Histophilus somni) strain 129Pt and comparison to Haemophilus ducreyi 35000HP and Haemophilus influenzae Rd.</title>
        <authorList>
            <person name="Challacombe J.F."/>
            <person name="Duncan A.J."/>
            <person name="Brettin T.S."/>
            <person name="Bruce D."/>
            <person name="Chertkov O."/>
            <person name="Detter J.C."/>
            <person name="Han C.S."/>
            <person name="Misra M."/>
            <person name="Richardson P."/>
            <person name="Tapia R."/>
            <person name="Thayer N."/>
            <person name="Xie G."/>
            <person name="Inzana T.J."/>
        </authorList>
    </citation>
    <scope>NUCLEOTIDE SEQUENCE [LARGE SCALE GENOMIC DNA]</scope>
    <source>
        <strain>129Pt</strain>
    </source>
</reference>
<proteinExistence type="inferred from homology"/>
<evidence type="ECO:0000255" key="1">
    <source>
        <dbReference type="HAMAP-Rule" id="MF_00384"/>
    </source>
</evidence>
<sequence>MLRIYAPASSANISVGFDTLGVAVSPIDGSLLGDVVQIEEIEQGFELESAGYFVRKLPKEPQKNIVYQAYVLFSERLKLRNLKIKPLRLTLEKNMPIGSGLGSSACSIVAALVALNQFYQQPFSKMELLEMMGELEGRISGSIHYDNVAPCYLGGVQLMVQSLGNICQQLPFFDNWYWVLAYPGIEVSTAEARAILPKSYTRQDVISHGRHLGSFVHACHTRQEALAAYMMRDVIAEPYREALLPNFAEVKQAVKDLGVLASGISGSGPTMFAIAPDLAIATKSATYLENNYLQNNEGFVHICKVDNVGARALV</sequence>
<feature type="chain" id="PRO_1000049136" description="Homoserine kinase">
    <location>
        <begin position="1"/>
        <end position="314"/>
    </location>
</feature>
<feature type="binding site" evidence="1">
    <location>
        <begin position="96"/>
        <end position="106"/>
    </location>
    <ligand>
        <name>ATP</name>
        <dbReference type="ChEBI" id="CHEBI:30616"/>
    </ligand>
</feature>
<name>KHSE_HISS1</name>
<keyword id="KW-0028">Amino-acid biosynthesis</keyword>
<keyword id="KW-0067">ATP-binding</keyword>
<keyword id="KW-0963">Cytoplasm</keyword>
<keyword id="KW-0418">Kinase</keyword>
<keyword id="KW-0547">Nucleotide-binding</keyword>
<keyword id="KW-0791">Threonine biosynthesis</keyword>
<keyword id="KW-0808">Transferase</keyword>